<organism>
    <name type="scientific">Salmonella paratyphi C (strain RKS4594)</name>
    <dbReference type="NCBI Taxonomy" id="476213"/>
    <lineage>
        <taxon>Bacteria</taxon>
        <taxon>Pseudomonadati</taxon>
        <taxon>Pseudomonadota</taxon>
        <taxon>Gammaproteobacteria</taxon>
        <taxon>Enterobacterales</taxon>
        <taxon>Enterobacteriaceae</taxon>
        <taxon>Salmonella</taxon>
    </lineage>
</organism>
<name>RPOZ_SALPC</name>
<gene>
    <name evidence="1" type="primary">rpoZ</name>
    <name type="ordered locus">SPC_3823</name>
</gene>
<dbReference type="EC" id="2.7.7.6" evidence="1"/>
<dbReference type="EMBL" id="CP000857">
    <property type="protein sequence ID" value="ACN47897.1"/>
    <property type="molecule type" value="Genomic_DNA"/>
</dbReference>
<dbReference type="RefSeq" id="WP_000135058.1">
    <property type="nucleotide sequence ID" value="NC_012125.1"/>
</dbReference>
<dbReference type="SMR" id="C0Q1Y1"/>
<dbReference type="GeneID" id="98390719"/>
<dbReference type="KEGG" id="sei:SPC_3823"/>
<dbReference type="HOGENOM" id="CLU_125406_5_3_6"/>
<dbReference type="Proteomes" id="UP000001599">
    <property type="component" value="Chromosome"/>
</dbReference>
<dbReference type="GO" id="GO:0000428">
    <property type="term" value="C:DNA-directed RNA polymerase complex"/>
    <property type="evidence" value="ECO:0007669"/>
    <property type="project" value="UniProtKB-KW"/>
</dbReference>
<dbReference type="GO" id="GO:0003677">
    <property type="term" value="F:DNA binding"/>
    <property type="evidence" value="ECO:0007669"/>
    <property type="project" value="UniProtKB-UniRule"/>
</dbReference>
<dbReference type="GO" id="GO:0003899">
    <property type="term" value="F:DNA-directed RNA polymerase activity"/>
    <property type="evidence" value="ECO:0007669"/>
    <property type="project" value="UniProtKB-UniRule"/>
</dbReference>
<dbReference type="GO" id="GO:0006351">
    <property type="term" value="P:DNA-templated transcription"/>
    <property type="evidence" value="ECO:0007669"/>
    <property type="project" value="UniProtKB-UniRule"/>
</dbReference>
<dbReference type="FunFam" id="3.90.940.10:FF:000001">
    <property type="entry name" value="DNA-directed RNA polymerase subunit omega"/>
    <property type="match status" value="1"/>
</dbReference>
<dbReference type="Gene3D" id="3.90.940.10">
    <property type="match status" value="1"/>
</dbReference>
<dbReference type="HAMAP" id="MF_00366">
    <property type="entry name" value="RNApol_bact_RpoZ"/>
    <property type="match status" value="1"/>
</dbReference>
<dbReference type="InterPro" id="IPR003716">
    <property type="entry name" value="DNA-dir_RNA_pol_omega"/>
</dbReference>
<dbReference type="InterPro" id="IPR006110">
    <property type="entry name" value="Pol_omega/Rpo6/RPB6"/>
</dbReference>
<dbReference type="InterPro" id="IPR036161">
    <property type="entry name" value="RPB6/omega-like_sf"/>
</dbReference>
<dbReference type="NCBIfam" id="TIGR00690">
    <property type="entry name" value="rpoZ"/>
    <property type="match status" value="1"/>
</dbReference>
<dbReference type="PANTHER" id="PTHR34476">
    <property type="entry name" value="DNA-DIRECTED RNA POLYMERASE SUBUNIT OMEGA"/>
    <property type="match status" value="1"/>
</dbReference>
<dbReference type="PANTHER" id="PTHR34476:SF1">
    <property type="entry name" value="DNA-DIRECTED RNA POLYMERASE SUBUNIT OMEGA"/>
    <property type="match status" value="1"/>
</dbReference>
<dbReference type="Pfam" id="PF01192">
    <property type="entry name" value="RNA_pol_Rpb6"/>
    <property type="match status" value="1"/>
</dbReference>
<dbReference type="SMART" id="SM01409">
    <property type="entry name" value="RNA_pol_Rpb6"/>
    <property type="match status" value="1"/>
</dbReference>
<dbReference type="SUPFAM" id="SSF63562">
    <property type="entry name" value="RPB6/omega subunit-like"/>
    <property type="match status" value="1"/>
</dbReference>
<proteinExistence type="inferred from homology"/>
<protein>
    <recommendedName>
        <fullName evidence="1">DNA-directed RNA polymerase subunit omega</fullName>
        <shortName evidence="1">RNAP omega subunit</shortName>
        <ecNumber evidence="1">2.7.7.6</ecNumber>
    </recommendedName>
    <alternativeName>
        <fullName evidence="1">RNA polymerase omega subunit</fullName>
    </alternativeName>
    <alternativeName>
        <fullName evidence="1">Transcriptase subunit omega</fullName>
    </alternativeName>
</protein>
<feature type="chain" id="PRO_1000194809" description="DNA-directed RNA polymerase subunit omega">
    <location>
        <begin position="1"/>
        <end position="91"/>
    </location>
</feature>
<keyword id="KW-0240">DNA-directed RNA polymerase</keyword>
<keyword id="KW-0548">Nucleotidyltransferase</keyword>
<keyword id="KW-0804">Transcription</keyword>
<keyword id="KW-0808">Transferase</keyword>
<accession>C0Q1Y1</accession>
<sequence length="91" mass="10237">MARVTVQDAVEKIGNRFDLVLVAARRARQMQVGGKDPLVPEENDKTTVIALREIEEGLINNQILDVRERQEQQEQEAAELQAVTAIAEGRR</sequence>
<comment type="function">
    <text evidence="1">Promotes RNA polymerase assembly. Latches the N- and C-terminal regions of the beta' subunit thereby facilitating its interaction with the beta and alpha subunits.</text>
</comment>
<comment type="catalytic activity">
    <reaction evidence="1">
        <text>RNA(n) + a ribonucleoside 5'-triphosphate = RNA(n+1) + diphosphate</text>
        <dbReference type="Rhea" id="RHEA:21248"/>
        <dbReference type="Rhea" id="RHEA-COMP:14527"/>
        <dbReference type="Rhea" id="RHEA-COMP:17342"/>
        <dbReference type="ChEBI" id="CHEBI:33019"/>
        <dbReference type="ChEBI" id="CHEBI:61557"/>
        <dbReference type="ChEBI" id="CHEBI:140395"/>
        <dbReference type="EC" id="2.7.7.6"/>
    </reaction>
</comment>
<comment type="subunit">
    <text evidence="1">The RNAP catalytic core consists of 2 alpha, 1 beta, 1 beta' and 1 omega subunit. When a sigma factor is associated with the core the holoenzyme is formed, which can initiate transcription.</text>
</comment>
<comment type="similarity">
    <text evidence="1">Belongs to the RNA polymerase subunit omega family.</text>
</comment>
<reference key="1">
    <citation type="journal article" date="2009" name="PLoS ONE">
        <title>Salmonella paratyphi C: genetic divergence from Salmonella choleraesuis and pathogenic convergence with Salmonella typhi.</title>
        <authorList>
            <person name="Liu W.-Q."/>
            <person name="Feng Y."/>
            <person name="Wang Y."/>
            <person name="Zou Q.-H."/>
            <person name="Chen F."/>
            <person name="Guo J.-T."/>
            <person name="Peng Y.-H."/>
            <person name="Jin Y."/>
            <person name="Li Y.-G."/>
            <person name="Hu S.-N."/>
            <person name="Johnston R.N."/>
            <person name="Liu G.-R."/>
            <person name="Liu S.-L."/>
        </authorList>
    </citation>
    <scope>NUCLEOTIDE SEQUENCE [LARGE SCALE GENOMIC DNA]</scope>
    <source>
        <strain>RKS4594</strain>
    </source>
</reference>
<evidence type="ECO:0000255" key="1">
    <source>
        <dbReference type="HAMAP-Rule" id="MF_00366"/>
    </source>
</evidence>